<name>HIS3_LEIXX</name>
<protein>
    <recommendedName>
        <fullName evidence="1">Phosphoribosyl-AMP cyclohydrolase</fullName>
        <shortName evidence="1">PRA-CH</shortName>
        <ecNumber evidence="1">3.5.4.19</ecNumber>
    </recommendedName>
</protein>
<dbReference type="EC" id="3.5.4.19" evidence="1"/>
<dbReference type="EMBL" id="AE016822">
    <property type="protein sequence ID" value="AAT88973.1"/>
    <property type="molecule type" value="Genomic_DNA"/>
</dbReference>
<dbReference type="RefSeq" id="WP_011185969.1">
    <property type="nucleotide sequence ID" value="NC_006087.1"/>
</dbReference>
<dbReference type="SMR" id="Q6AF72"/>
<dbReference type="STRING" id="281090.Lxx11240"/>
<dbReference type="KEGG" id="lxx:Lxx11240"/>
<dbReference type="eggNOG" id="COG0139">
    <property type="taxonomic scope" value="Bacteria"/>
</dbReference>
<dbReference type="HOGENOM" id="CLU_048577_5_1_11"/>
<dbReference type="UniPathway" id="UPA00031">
    <property type="reaction ID" value="UER00008"/>
</dbReference>
<dbReference type="Proteomes" id="UP000001306">
    <property type="component" value="Chromosome"/>
</dbReference>
<dbReference type="GO" id="GO:0005737">
    <property type="term" value="C:cytoplasm"/>
    <property type="evidence" value="ECO:0007669"/>
    <property type="project" value="UniProtKB-SubCell"/>
</dbReference>
<dbReference type="GO" id="GO:0000287">
    <property type="term" value="F:magnesium ion binding"/>
    <property type="evidence" value="ECO:0007669"/>
    <property type="project" value="UniProtKB-UniRule"/>
</dbReference>
<dbReference type="GO" id="GO:0004635">
    <property type="term" value="F:phosphoribosyl-AMP cyclohydrolase activity"/>
    <property type="evidence" value="ECO:0007669"/>
    <property type="project" value="UniProtKB-UniRule"/>
</dbReference>
<dbReference type="GO" id="GO:0008270">
    <property type="term" value="F:zinc ion binding"/>
    <property type="evidence" value="ECO:0007669"/>
    <property type="project" value="UniProtKB-UniRule"/>
</dbReference>
<dbReference type="GO" id="GO:0000105">
    <property type="term" value="P:L-histidine biosynthetic process"/>
    <property type="evidence" value="ECO:0007669"/>
    <property type="project" value="UniProtKB-UniRule"/>
</dbReference>
<dbReference type="FunFam" id="3.10.20.810:FF:000001">
    <property type="entry name" value="Histidine biosynthesis bifunctional protein HisIE"/>
    <property type="match status" value="1"/>
</dbReference>
<dbReference type="Gene3D" id="3.10.20.810">
    <property type="entry name" value="Phosphoribosyl-AMP cyclohydrolase"/>
    <property type="match status" value="1"/>
</dbReference>
<dbReference type="HAMAP" id="MF_01021">
    <property type="entry name" value="HisI"/>
    <property type="match status" value="1"/>
</dbReference>
<dbReference type="InterPro" id="IPR026660">
    <property type="entry name" value="PRA-CH"/>
</dbReference>
<dbReference type="InterPro" id="IPR002496">
    <property type="entry name" value="PRib_AMP_CycHydrolase_dom"/>
</dbReference>
<dbReference type="InterPro" id="IPR038019">
    <property type="entry name" value="PRib_AMP_CycHydrolase_sf"/>
</dbReference>
<dbReference type="NCBIfam" id="NF000768">
    <property type="entry name" value="PRK00051.1"/>
    <property type="match status" value="1"/>
</dbReference>
<dbReference type="PANTHER" id="PTHR42945">
    <property type="entry name" value="HISTIDINE BIOSYNTHESIS BIFUNCTIONAL PROTEIN"/>
    <property type="match status" value="1"/>
</dbReference>
<dbReference type="PANTHER" id="PTHR42945:SF11">
    <property type="entry name" value="PHOSPHORIBOSYL-AMP CYCLOHYDROLASE"/>
    <property type="match status" value="1"/>
</dbReference>
<dbReference type="Pfam" id="PF01502">
    <property type="entry name" value="PRA-CH"/>
    <property type="match status" value="1"/>
</dbReference>
<dbReference type="SUPFAM" id="SSF141734">
    <property type="entry name" value="HisI-like"/>
    <property type="match status" value="1"/>
</dbReference>
<feature type="chain" id="PRO_0000229824" description="Phosphoribosyl-AMP cyclohydrolase">
    <location>
        <begin position="1"/>
        <end position="125"/>
    </location>
</feature>
<feature type="binding site" evidence="1">
    <location>
        <position position="80"/>
    </location>
    <ligand>
        <name>Mg(2+)</name>
        <dbReference type="ChEBI" id="CHEBI:18420"/>
    </ligand>
</feature>
<feature type="binding site" evidence="1">
    <location>
        <position position="81"/>
    </location>
    <ligand>
        <name>Zn(2+)</name>
        <dbReference type="ChEBI" id="CHEBI:29105"/>
        <note>ligand shared between dimeric partners</note>
    </ligand>
</feature>
<feature type="binding site" evidence="1">
    <location>
        <position position="82"/>
    </location>
    <ligand>
        <name>Mg(2+)</name>
        <dbReference type="ChEBI" id="CHEBI:18420"/>
    </ligand>
</feature>
<feature type="binding site" evidence="1">
    <location>
        <position position="84"/>
    </location>
    <ligand>
        <name>Mg(2+)</name>
        <dbReference type="ChEBI" id="CHEBI:18420"/>
    </ligand>
</feature>
<feature type="binding site" evidence="1">
    <location>
        <position position="97"/>
    </location>
    <ligand>
        <name>Zn(2+)</name>
        <dbReference type="ChEBI" id="CHEBI:29105"/>
        <note>ligand shared between dimeric partners</note>
    </ligand>
</feature>
<feature type="binding site" evidence="1">
    <location>
        <position position="104"/>
    </location>
    <ligand>
        <name>Zn(2+)</name>
        <dbReference type="ChEBI" id="CHEBI:29105"/>
        <note>ligand shared between dimeric partners</note>
    </ligand>
</feature>
<keyword id="KW-0028">Amino-acid biosynthesis</keyword>
<keyword id="KW-0963">Cytoplasm</keyword>
<keyword id="KW-0368">Histidine biosynthesis</keyword>
<keyword id="KW-0378">Hydrolase</keyword>
<keyword id="KW-0460">Magnesium</keyword>
<keyword id="KW-0479">Metal-binding</keyword>
<keyword id="KW-1185">Reference proteome</keyword>
<keyword id="KW-0862">Zinc</keyword>
<proteinExistence type="inferred from homology"/>
<organism>
    <name type="scientific">Leifsonia xyli subsp. xyli (strain CTCB07)</name>
    <dbReference type="NCBI Taxonomy" id="281090"/>
    <lineage>
        <taxon>Bacteria</taxon>
        <taxon>Bacillati</taxon>
        <taxon>Actinomycetota</taxon>
        <taxon>Actinomycetes</taxon>
        <taxon>Micrococcales</taxon>
        <taxon>Microbacteriaceae</taxon>
        <taxon>Leifsonia</taxon>
    </lineage>
</organism>
<accession>Q6AF72</accession>
<reference key="1">
    <citation type="journal article" date="2004" name="Mol. Plant Microbe Interact.">
        <title>The genome sequence of the Gram-positive sugarcane pathogen Leifsonia xyli subsp. xyli.</title>
        <authorList>
            <person name="Monteiro-Vitorello C.B."/>
            <person name="Camargo L.E.A."/>
            <person name="Van Sluys M.A."/>
            <person name="Kitajima J.P."/>
            <person name="Truffi D."/>
            <person name="do Amaral A.M."/>
            <person name="Harakava R."/>
            <person name="de Oliveira J.C.F."/>
            <person name="Wood D."/>
            <person name="de Oliveira M.C."/>
            <person name="Miyaki C.Y."/>
            <person name="Takita M.A."/>
            <person name="da Silva A.C.R."/>
            <person name="Furlan L.R."/>
            <person name="Carraro D.M."/>
            <person name="Camarotte G."/>
            <person name="Almeida N.F. Jr."/>
            <person name="Carrer H."/>
            <person name="Coutinho L.L."/>
            <person name="El-Dorry H.A."/>
            <person name="Ferro M.I.T."/>
            <person name="Gagliardi P.R."/>
            <person name="Giglioti E."/>
            <person name="Goldman M.H.S."/>
            <person name="Goldman G.H."/>
            <person name="Kimura E.T."/>
            <person name="Ferro E.S."/>
            <person name="Kuramae E.E."/>
            <person name="Lemos E.G.M."/>
            <person name="Lemos M.V.F."/>
            <person name="Mauro S.M.Z."/>
            <person name="Machado M.A."/>
            <person name="Marino C.L."/>
            <person name="Menck C.F."/>
            <person name="Nunes L.R."/>
            <person name="Oliveira R.C."/>
            <person name="Pereira G.G."/>
            <person name="Siqueira W."/>
            <person name="de Souza A.A."/>
            <person name="Tsai S.M."/>
            <person name="Zanca A.S."/>
            <person name="Simpson A.J.G."/>
            <person name="Brumbley S.M."/>
            <person name="Setubal J.C."/>
        </authorList>
    </citation>
    <scope>NUCLEOTIDE SEQUENCE [LARGE SCALE GENOMIC DNA]</scope>
    <source>
        <strain>CTCB07</strain>
    </source>
</reference>
<evidence type="ECO:0000255" key="1">
    <source>
        <dbReference type="HAMAP-Rule" id="MF_01021"/>
    </source>
</evidence>
<comment type="function">
    <text evidence="1">Catalyzes the hydrolysis of the adenine ring of phosphoribosyl-AMP.</text>
</comment>
<comment type="catalytic activity">
    <reaction evidence="1">
        <text>1-(5-phospho-beta-D-ribosyl)-5'-AMP + H2O = 1-(5-phospho-beta-D-ribosyl)-5-[(5-phospho-beta-D-ribosylamino)methylideneamino]imidazole-4-carboxamide</text>
        <dbReference type="Rhea" id="RHEA:20049"/>
        <dbReference type="ChEBI" id="CHEBI:15377"/>
        <dbReference type="ChEBI" id="CHEBI:58435"/>
        <dbReference type="ChEBI" id="CHEBI:59457"/>
        <dbReference type="EC" id="3.5.4.19"/>
    </reaction>
</comment>
<comment type="cofactor">
    <cofactor evidence="1">
        <name>Mg(2+)</name>
        <dbReference type="ChEBI" id="CHEBI:18420"/>
    </cofactor>
    <text evidence="1">Binds 1 Mg(2+) ion per subunit.</text>
</comment>
<comment type="cofactor">
    <cofactor evidence="1">
        <name>Zn(2+)</name>
        <dbReference type="ChEBI" id="CHEBI:29105"/>
    </cofactor>
    <text evidence="1">Binds 1 zinc ion per subunit.</text>
</comment>
<comment type="pathway">
    <text evidence="1">Amino-acid biosynthesis; L-histidine biosynthesis; L-histidine from 5-phospho-alpha-D-ribose 1-diphosphate: step 3/9.</text>
</comment>
<comment type="subunit">
    <text evidence="1">Homodimer.</text>
</comment>
<comment type="subcellular location">
    <subcellularLocation>
        <location evidence="1">Cytoplasm</location>
    </subcellularLocation>
</comment>
<comment type="similarity">
    <text evidence="1">Belongs to the PRA-CH family.</text>
</comment>
<gene>
    <name evidence="1" type="primary">hisI</name>
    <name type="ordered locus">Lxx11240</name>
</gene>
<sequence>MTGLDEALTRIRFTDTGLVPAIVQQWYTRDVLMMGWMDAEAFRRTMTEGRVTFWSRSRQEYWRKGDSSGNIQFVRGVALDCDGDTLLVTVDQVGAACHTGTYTCFDADPLAPVLGERPESAADGW</sequence>